<reference key="1">
    <citation type="journal article" date="2003" name="J. Mol. Biol.">
        <title>Sub-families of alpha/beta barrel enzymes: a new adenine deaminase family.</title>
        <authorList>
            <person name="Ribard C."/>
            <person name="Rochet M."/>
            <person name="Labedan B."/>
            <person name="Daignan-Fornier B."/>
            <person name="Alzari P."/>
            <person name="Scazzocchio C."/>
            <person name="Oestreicher N."/>
        </authorList>
    </citation>
    <scope>NUCLEOTIDE SEQUENCE [GENOMIC DNA]</scope>
    <scope>FUNCTION</scope>
    <scope>MUTAGENESIS OF ARG-150</scope>
</reference>
<reference key="2">
    <citation type="journal article" date="2002" name="Nature">
        <title>The genome sequence of Schizosaccharomyces pombe.</title>
        <authorList>
            <person name="Wood V."/>
            <person name="Gwilliam R."/>
            <person name="Rajandream M.A."/>
            <person name="Lyne M.H."/>
            <person name="Lyne R."/>
            <person name="Stewart A."/>
            <person name="Sgouros J.G."/>
            <person name="Peat N."/>
            <person name="Hayles J."/>
            <person name="Baker S.G."/>
            <person name="Basham D."/>
            <person name="Bowman S."/>
            <person name="Brooks K."/>
            <person name="Brown D."/>
            <person name="Brown S."/>
            <person name="Chillingworth T."/>
            <person name="Churcher C.M."/>
            <person name="Collins M."/>
            <person name="Connor R."/>
            <person name="Cronin A."/>
            <person name="Davis P."/>
            <person name="Feltwell T."/>
            <person name="Fraser A."/>
            <person name="Gentles S."/>
            <person name="Goble A."/>
            <person name="Hamlin N."/>
            <person name="Harris D.E."/>
            <person name="Hidalgo J."/>
            <person name="Hodgson G."/>
            <person name="Holroyd S."/>
            <person name="Hornsby T."/>
            <person name="Howarth S."/>
            <person name="Huckle E.J."/>
            <person name="Hunt S."/>
            <person name="Jagels K."/>
            <person name="James K.D."/>
            <person name="Jones L."/>
            <person name="Jones M."/>
            <person name="Leather S."/>
            <person name="McDonald S."/>
            <person name="McLean J."/>
            <person name="Mooney P."/>
            <person name="Moule S."/>
            <person name="Mungall K.L."/>
            <person name="Murphy L.D."/>
            <person name="Niblett D."/>
            <person name="Odell C."/>
            <person name="Oliver K."/>
            <person name="O'Neil S."/>
            <person name="Pearson D."/>
            <person name="Quail M.A."/>
            <person name="Rabbinowitsch E."/>
            <person name="Rutherford K.M."/>
            <person name="Rutter S."/>
            <person name="Saunders D."/>
            <person name="Seeger K."/>
            <person name="Sharp S."/>
            <person name="Skelton J."/>
            <person name="Simmonds M.N."/>
            <person name="Squares R."/>
            <person name="Squares S."/>
            <person name="Stevens K."/>
            <person name="Taylor K."/>
            <person name="Taylor R.G."/>
            <person name="Tivey A."/>
            <person name="Walsh S.V."/>
            <person name="Warren T."/>
            <person name="Whitehead S."/>
            <person name="Woodward J.R."/>
            <person name="Volckaert G."/>
            <person name="Aert R."/>
            <person name="Robben J."/>
            <person name="Grymonprez B."/>
            <person name="Weltjens I."/>
            <person name="Vanstreels E."/>
            <person name="Rieger M."/>
            <person name="Schaefer M."/>
            <person name="Mueller-Auer S."/>
            <person name="Gabel C."/>
            <person name="Fuchs M."/>
            <person name="Duesterhoeft A."/>
            <person name="Fritzc C."/>
            <person name="Holzer E."/>
            <person name="Moestl D."/>
            <person name="Hilbert H."/>
            <person name="Borzym K."/>
            <person name="Langer I."/>
            <person name="Beck A."/>
            <person name="Lehrach H."/>
            <person name="Reinhardt R."/>
            <person name="Pohl T.M."/>
            <person name="Eger P."/>
            <person name="Zimmermann W."/>
            <person name="Wedler H."/>
            <person name="Wambutt R."/>
            <person name="Purnelle B."/>
            <person name="Goffeau A."/>
            <person name="Cadieu E."/>
            <person name="Dreano S."/>
            <person name="Gloux S."/>
            <person name="Lelaure V."/>
            <person name="Mottier S."/>
            <person name="Galibert F."/>
            <person name="Aves S.J."/>
            <person name="Xiang Z."/>
            <person name="Hunt C."/>
            <person name="Moore K."/>
            <person name="Hurst S.M."/>
            <person name="Lucas M."/>
            <person name="Rochet M."/>
            <person name="Gaillardin C."/>
            <person name="Tallada V.A."/>
            <person name="Garzon A."/>
            <person name="Thode G."/>
            <person name="Daga R.R."/>
            <person name="Cruzado L."/>
            <person name="Jimenez J."/>
            <person name="Sanchez M."/>
            <person name="del Rey F."/>
            <person name="Benito J."/>
            <person name="Dominguez A."/>
            <person name="Revuelta J.L."/>
            <person name="Moreno S."/>
            <person name="Armstrong J."/>
            <person name="Forsburg S.L."/>
            <person name="Cerutti L."/>
            <person name="Lowe T."/>
            <person name="McCombie W.R."/>
            <person name="Paulsen I."/>
            <person name="Potashkin J."/>
            <person name="Shpakovski G.V."/>
            <person name="Ussery D."/>
            <person name="Barrell B.G."/>
            <person name="Nurse P."/>
        </authorList>
    </citation>
    <scope>NUCLEOTIDE SEQUENCE [LARGE SCALE GENOMIC DNA]</scope>
    <source>
        <strain>972 / ATCC 24843</strain>
    </source>
</reference>
<reference key="3">
    <citation type="journal article" date="2006" name="Nat. Biotechnol.">
        <title>ORFeome cloning and global analysis of protein localization in the fission yeast Schizosaccharomyces pombe.</title>
        <authorList>
            <person name="Matsuyama A."/>
            <person name="Arai R."/>
            <person name="Yashiroda Y."/>
            <person name="Shirai A."/>
            <person name="Kamata A."/>
            <person name="Sekido S."/>
            <person name="Kobayashi Y."/>
            <person name="Hashimoto A."/>
            <person name="Hamamoto M."/>
            <person name="Hiraoka Y."/>
            <person name="Horinouchi S."/>
            <person name="Yoshida M."/>
        </authorList>
    </citation>
    <scope>SUBCELLULAR LOCATION [LARGE SCALE ANALYSIS]</scope>
</reference>
<reference key="4">
    <citation type="journal article" date="2008" name="Biosci. Rep.">
        <title>Hydrolytic cleavage of N6-substituted adenine derivatives by eukaryotic adenine and adenosine deaminases.</title>
        <authorList>
            <person name="Pospisilova H."/>
            <person name="Sebela M."/>
            <person name="Novak O."/>
            <person name="Frebort I."/>
        </authorList>
    </citation>
    <scope>FUNCTION</scope>
    <scope>BIOPHYSICOCHEMICAL PROPERTIES</scope>
</reference>
<keyword id="KW-0963">Cytoplasm</keyword>
<keyword id="KW-0378">Hydrolase</keyword>
<keyword id="KW-0479">Metal-binding</keyword>
<keyword id="KW-0546">Nucleotide metabolism</keyword>
<keyword id="KW-0539">Nucleus</keyword>
<keyword id="KW-1185">Reference proteome</keyword>
<keyword id="KW-0862">Zinc</keyword>
<accession>Q9P6I7</accession>
<name>ADE_SCHPO</name>
<evidence type="ECO:0000255" key="1">
    <source>
        <dbReference type="HAMAP-Rule" id="MF_03145"/>
    </source>
</evidence>
<evidence type="ECO:0000269" key="2">
    <source>
    </source>
</evidence>
<evidence type="ECO:0000269" key="3">
    <source>
    </source>
</evidence>
<evidence type="ECO:0000269" key="4">
    <source>
    </source>
</evidence>
<evidence type="ECO:0000303" key="5">
    <source>
    </source>
</evidence>
<sequence>MSNLPIYNFIRKLPKCEHHVHLEGCLSPDLVFRLAKKNGITLPSDDAAYTTPSTLLASYEHFGCLDDFLRYYYIAVSVLIEASDFEALAYEYFSIAHSQGVHHAEVFFDPQTHTSRGISYDVVVSGFSAACERANRDFGMSTNLIMCFLRHLPSEAAHETFAEALKRNDFENGIVAGVGLDSSEVDFPPELFQEVYKLAAEKGIRRTGHAGEEGDPSYIRSGLDNLSLQRIDHGIRLVEDKELMKRVAEENIMLTMCPLSNLKLRCVNSIAELPVREFLEAGVPFSINCDDPAYFGGYTLENYFAIQKHFNLTVKEWVFIANAAINGSWISGKRKEELLSSVQKCVKEYTAEIQQPKTLETAVEVQA</sequence>
<dbReference type="EC" id="3.5.4.2" evidence="1"/>
<dbReference type="EMBL" id="CU329671">
    <property type="protein sequence ID" value="CAB91177.1"/>
    <property type="molecule type" value="Genomic_DNA"/>
</dbReference>
<dbReference type="RefSeq" id="NP_595071.1">
    <property type="nucleotide sequence ID" value="NM_001020977.2"/>
</dbReference>
<dbReference type="SMR" id="Q9P6I7"/>
<dbReference type="BioGRID" id="276604">
    <property type="interactions" value="1"/>
</dbReference>
<dbReference type="FunCoup" id="Q9P6I7">
    <property type="interactions" value="182"/>
</dbReference>
<dbReference type="STRING" id="284812.Q9P6I7"/>
<dbReference type="iPTMnet" id="Q9P6I7"/>
<dbReference type="PaxDb" id="4896-SPBC1198.02.1"/>
<dbReference type="EnsemblFungi" id="SPBC1198.02.1">
    <property type="protein sequence ID" value="SPBC1198.02.1:pep"/>
    <property type="gene ID" value="SPBC1198.02"/>
</dbReference>
<dbReference type="GeneID" id="2540066"/>
<dbReference type="KEGG" id="spo:2540066"/>
<dbReference type="PomBase" id="SPBC1198.02"/>
<dbReference type="VEuPathDB" id="FungiDB:SPBC1198.02"/>
<dbReference type="eggNOG" id="KOG1097">
    <property type="taxonomic scope" value="Eukaryota"/>
</dbReference>
<dbReference type="HOGENOM" id="CLU_039228_7_0_1"/>
<dbReference type="InParanoid" id="Q9P6I7"/>
<dbReference type="OMA" id="NHFTIHA"/>
<dbReference type="PhylomeDB" id="Q9P6I7"/>
<dbReference type="BRENDA" id="3.5.4.2">
    <property type="organism ID" value="5613"/>
</dbReference>
<dbReference type="BRENDA" id="3.5.4.4">
    <property type="organism ID" value="5613"/>
</dbReference>
<dbReference type="PRO" id="PR:Q9P6I7"/>
<dbReference type="Proteomes" id="UP000002485">
    <property type="component" value="Chromosome II"/>
</dbReference>
<dbReference type="GO" id="GO:0005829">
    <property type="term" value="C:cytosol"/>
    <property type="evidence" value="ECO:0007005"/>
    <property type="project" value="PomBase"/>
</dbReference>
<dbReference type="GO" id="GO:0005634">
    <property type="term" value="C:nucleus"/>
    <property type="evidence" value="ECO:0007005"/>
    <property type="project" value="PomBase"/>
</dbReference>
<dbReference type="GO" id="GO:0000034">
    <property type="term" value="F:adenine deaminase activity"/>
    <property type="evidence" value="ECO:0000314"/>
    <property type="project" value="PomBase"/>
</dbReference>
<dbReference type="GO" id="GO:0008270">
    <property type="term" value="F:zinc ion binding"/>
    <property type="evidence" value="ECO:0007669"/>
    <property type="project" value="UniProtKB-UniRule"/>
</dbReference>
<dbReference type="GO" id="GO:0006146">
    <property type="term" value="P:adenine catabolic process"/>
    <property type="evidence" value="ECO:0000314"/>
    <property type="project" value="PomBase"/>
</dbReference>
<dbReference type="GO" id="GO:0043103">
    <property type="term" value="P:hypoxanthine salvage"/>
    <property type="evidence" value="ECO:0000314"/>
    <property type="project" value="PomBase"/>
</dbReference>
<dbReference type="GO" id="GO:0032264">
    <property type="term" value="P:IMP salvage"/>
    <property type="evidence" value="ECO:0000314"/>
    <property type="project" value="PomBase"/>
</dbReference>
<dbReference type="CDD" id="cd01320">
    <property type="entry name" value="ADA"/>
    <property type="match status" value="1"/>
</dbReference>
<dbReference type="FunFam" id="3.20.20.140:FF:000039">
    <property type="entry name" value="Adenine deaminase"/>
    <property type="match status" value="1"/>
</dbReference>
<dbReference type="Gene3D" id="3.20.20.140">
    <property type="entry name" value="Metal-dependent hydrolases"/>
    <property type="match status" value="1"/>
</dbReference>
<dbReference type="HAMAP" id="MF_01962">
    <property type="entry name" value="Adenine_deaminase"/>
    <property type="match status" value="1"/>
</dbReference>
<dbReference type="InterPro" id="IPR001365">
    <property type="entry name" value="A_deaminase_dom"/>
</dbReference>
<dbReference type="InterPro" id="IPR028892">
    <property type="entry name" value="ADE"/>
</dbReference>
<dbReference type="InterPro" id="IPR006330">
    <property type="entry name" value="Ado/ade_deaminase"/>
</dbReference>
<dbReference type="InterPro" id="IPR032466">
    <property type="entry name" value="Metal_Hydrolase"/>
</dbReference>
<dbReference type="NCBIfam" id="TIGR01430">
    <property type="entry name" value="aden_deam"/>
    <property type="match status" value="1"/>
</dbReference>
<dbReference type="PANTHER" id="PTHR43114">
    <property type="entry name" value="ADENINE DEAMINASE"/>
    <property type="match status" value="1"/>
</dbReference>
<dbReference type="PANTHER" id="PTHR43114:SF6">
    <property type="entry name" value="ADENINE DEAMINASE"/>
    <property type="match status" value="1"/>
</dbReference>
<dbReference type="Pfam" id="PF00962">
    <property type="entry name" value="A_deaminase"/>
    <property type="match status" value="1"/>
</dbReference>
<dbReference type="SUPFAM" id="SSF51556">
    <property type="entry name" value="Metallo-dependent hydrolases"/>
    <property type="match status" value="1"/>
</dbReference>
<comment type="function">
    <text evidence="1 2 4">Catalyzes the hydrolytic deamination of adenine to hypoxanthine. Plays an important role in the purine salvage pathway and in nitrogen catabolism. Also exhibits a low activity towards N(6)-substituted adenines that are commonly known as the plant hormones cytokinins.</text>
</comment>
<comment type="catalytic activity">
    <reaction evidence="1">
        <text>adenine + H2O + H(+) = hypoxanthine + NH4(+)</text>
        <dbReference type="Rhea" id="RHEA:23688"/>
        <dbReference type="ChEBI" id="CHEBI:15377"/>
        <dbReference type="ChEBI" id="CHEBI:15378"/>
        <dbReference type="ChEBI" id="CHEBI:16708"/>
        <dbReference type="ChEBI" id="CHEBI:17368"/>
        <dbReference type="ChEBI" id="CHEBI:28938"/>
        <dbReference type="EC" id="3.5.4.2"/>
    </reaction>
</comment>
<comment type="cofactor">
    <cofactor evidence="1">
        <name>Zn(2+)</name>
        <dbReference type="ChEBI" id="CHEBI:29105"/>
    </cofactor>
    <text evidence="1">Binds 1 zinc ion per subunit.</text>
</comment>
<comment type="biophysicochemical properties">
    <kinetics>
        <KM evidence="4">32 uM for adenine</KM>
    </kinetics>
    <phDependence>
        <text evidence="4">Optimum pH is 6.7.</text>
    </phDependence>
    <temperatureDependence>
        <text evidence="4">Optimum temperature is 33 degrees Celsius.</text>
    </temperatureDependence>
</comment>
<comment type="subcellular location">
    <subcellularLocation>
        <location evidence="1 3">Cytoplasm</location>
    </subcellularLocation>
    <subcellularLocation>
        <location evidence="1 3">Nucleus</location>
    </subcellularLocation>
</comment>
<comment type="similarity">
    <text evidence="1">Belongs to the metallo-dependent hydrolases superfamily. Adenosine and AMP deaminases family. Adenine deaminase type 2 subfamily.</text>
</comment>
<proteinExistence type="evidence at protein level"/>
<feature type="chain" id="PRO_0000256237" description="Adenine deaminase">
    <location>
        <begin position="1"/>
        <end position="367"/>
    </location>
</feature>
<feature type="active site" description="Proton donor" evidence="1">
    <location>
        <position position="212"/>
    </location>
</feature>
<feature type="binding site" evidence="1">
    <location>
        <position position="19"/>
    </location>
    <ligand>
        <name>Zn(2+)</name>
        <dbReference type="ChEBI" id="CHEBI:29105"/>
        <note>catalytic</note>
    </ligand>
</feature>
<feature type="binding site" evidence="1">
    <location>
        <position position="21"/>
    </location>
    <ligand>
        <name>Zn(2+)</name>
        <dbReference type="ChEBI" id="CHEBI:29105"/>
        <note>catalytic</note>
    </ligand>
</feature>
<feature type="binding site" evidence="1">
    <location>
        <position position="209"/>
    </location>
    <ligand>
        <name>Zn(2+)</name>
        <dbReference type="ChEBI" id="CHEBI:29105"/>
        <note>catalytic</note>
    </ligand>
</feature>
<feature type="binding site" evidence="1">
    <location>
        <position position="290"/>
    </location>
    <ligand>
        <name>Zn(2+)</name>
        <dbReference type="ChEBI" id="CHEBI:29105"/>
        <note>catalytic</note>
    </ligand>
</feature>
<feature type="binding site" evidence="1">
    <location>
        <position position="291"/>
    </location>
    <ligand>
        <name>substrate</name>
    </ligand>
</feature>
<feature type="site" description="Important for catalytic activity" evidence="1">
    <location>
        <position position="233"/>
    </location>
</feature>
<feature type="mutagenesis site" description="In dea2-1: Abolishes adenine deaminase activity." evidence="2">
    <original>R</original>
    <variation>H</variation>
    <location>
        <position position="150"/>
    </location>
</feature>
<gene>
    <name evidence="5" type="primary">dea2</name>
    <name type="ORF">SPBC1198.02</name>
</gene>
<organism>
    <name type="scientific">Schizosaccharomyces pombe (strain 972 / ATCC 24843)</name>
    <name type="common">Fission yeast</name>
    <dbReference type="NCBI Taxonomy" id="284812"/>
    <lineage>
        <taxon>Eukaryota</taxon>
        <taxon>Fungi</taxon>
        <taxon>Dikarya</taxon>
        <taxon>Ascomycota</taxon>
        <taxon>Taphrinomycotina</taxon>
        <taxon>Schizosaccharomycetes</taxon>
        <taxon>Schizosaccharomycetales</taxon>
        <taxon>Schizosaccharomycetaceae</taxon>
        <taxon>Schizosaccharomyces</taxon>
    </lineage>
</organism>
<protein>
    <recommendedName>
        <fullName evidence="1">Adenine deaminase</fullName>
        <shortName evidence="1">ADE</shortName>
        <ecNumber evidence="1">3.5.4.2</ecNumber>
    </recommendedName>
    <alternativeName>
        <fullName evidence="1">Adenine aminohydrolase</fullName>
        <shortName evidence="1">AAH</shortName>
    </alternativeName>
</protein>